<evidence type="ECO:0000255" key="1"/>
<evidence type="ECO:0000255" key="2">
    <source>
        <dbReference type="PROSITE-ProRule" id="PRU00297"/>
    </source>
</evidence>
<evidence type="ECO:0000255" key="3">
    <source>
        <dbReference type="PROSITE-ProRule" id="PRU10012"/>
    </source>
</evidence>
<evidence type="ECO:0000305" key="4"/>
<feature type="signal peptide" evidence="1">
    <location>
        <begin position="1"/>
        <end position="22"/>
    </location>
</feature>
<feature type="chain" id="PRO_0000023679" description="Peroxidase 13">
    <location>
        <begin position="23"/>
        <end position="319"/>
    </location>
</feature>
<feature type="active site" description="Proton acceptor" evidence="2 3">
    <location>
        <position position="64"/>
    </location>
</feature>
<feature type="binding site" evidence="2">
    <location>
        <position position="65"/>
    </location>
    <ligand>
        <name>Ca(2+)</name>
        <dbReference type="ChEBI" id="CHEBI:29108"/>
        <label>1</label>
    </ligand>
</feature>
<feature type="binding site" evidence="2">
    <location>
        <position position="68"/>
    </location>
    <ligand>
        <name>Ca(2+)</name>
        <dbReference type="ChEBI" id="CHEBI:29108"/>
        <label>1</label>
    </ligand>
</feature>
<feature type="binding site" evidence="2">
    <location>
        <position position="70"/>
    </location>
    <ligand>
        <name>Ca(2+)</name>
        <dbReference type="ChEBI" id="CHEBI:29108"/>
        <label>1</label>
    </ligand>
</feature>
<feature type="binding site" evidence="2">
    <location>
        <position position="72"/>
    </location>
    <ligand>
        <name>Ca(2+)</name>
        <dbReference type="ChEBI" id="CHEBI:29108"/>
        <label>1</label>
    </ligand>
</feature>
<feature type="binding site" evidence="2">
    <location>
        <position position="74"/>
    </location>
    <ligand>
        <name>Ca(2+)</name>
        <dbReference type="ChEBI" id="CHEBI:29108"/>
        <label>1</label>
    </ligand>
</feature>
<feature type="binding site" evidence="2">
    <location>
        <position position="158"/>
    </location>
    <ligand>
        <name>substrate</name>
    </ligand>
</feature>
<feature type="binding site" description="axial binding residue" evidence="2">
    <location>
        <position position="189"/>
    </location>
    <ligand>
        <name>heme b</name>
        <dbReference type="ChEBI" id="CHEBI:60344"/>
    </ligand>
    <ligandPart>
        <name>Fe</name>
        <dbReference type="ChEBI" id="CHEBI:18248"/>
    </ligandPart>
</feature>
<feature type="binding site" evidence="2">
    <location>
        <position position="190"/>
    </location>
    <ligand>
        <name>Ca(2+)</name>
        <dbReference type="ChEBI" id="CHEBI:29108"/>
        <label>2</label>
    </ligand>
</feature>
<feature type="binding site" evidence="2">
    <location>
        <position position="235"/>
    </location>
    <ligand>
        <name>Ca(2+)</name>
        <dbReference type="ChEBI" id="CHEBI:29108"/>
        <label>2</label>
    </ligand>
</feature>
<feature type="binding site" evidence="2">
    <location>
        <position position="238"/>
    </location>
    <ligand>
        <name>Ca(2+)</name>
        <dbReference type="ChEBI" id="CHEBI:29108"/>
        <label>2</label>
    </ligand>
</feature>
<feature type="binding site" evidence="2">
    <location>
        <position position="243"/>
    </location>
    <ligand>
        <name>Ca(2+)</name>
        <dbReference type="ChEBI" id="CHEBI:29108"/>
        <label>2</label>
    </ligand>
</feature>
<feature type="site" description="Transition state stabilizer" evidence="2">
    <location>
        <position position="60"/>
    </location>
</feature>
<feature type="glycosylation site" description="N-linked (GlcNAc...) asparagine" evidence="1">
    <location>
        <position position="280"/>
    </location>
</feature>
<feature type="disulfide bond" evidence="2">
    <location>
        <begin position="33"/>
        <end position="111"/>
    </location>
</feature>
<feature type="disulfide bond" evidence="2">
    <location>
        <begin position="66"/>
        <end position="71"/>
    </location>
</feature>
<feature type="disulfide bond" evidence="2">
    <location>
        <begin position="117"/>
        <end position="315"/>
    </location>
</feature>
<feature type="disulfide bond" evidence="2">
    <location>
        <begin position="196"/>
        <end position="222"/>
    </location>
</feature>
<reference key="1">
    <citation type="journal article" date="2000" name="Nature">
        <title>Sequence and analysis of chromosome 1 of the plant Arabidopsis thaliana.</title>
        <authorList>
            <person name="Theologis A."/>
            <person name="Ecker J.R."/>
            <person name="Palm C.J."/>
            <person name="Federspiel N.A."/>
            <person name="Kaul S."/>
            <person name="White O."/>
            <person name="Alonso J."/>
            <person name="Altafi H."/>
            <person name="Araujo R."/>
            <person name="Bowman C.L."/>
            <person name="Brooks S.Y."/>
            <person name="Buehler E."/>
            <person name="Chan A."/>
            <person name="Chao Q."/>
            <person name="Chen H."/>
            <person name="Cheuk R.F."/>
            <person name="Chin C.W."/>
            <person name="Chung M.K."/>
            <person name="Conn L."/>
            <person name="Conway A.B."/>
            <person name="Conway A.R."/>
            <person name="Creasy T.H."/>
            <person name="Dewar K."/>
            <person name="Dunn P."/>
            <person name="Etgu P."/>
            <person name="Feldblyum T.V."/>
            <person name="Feng J.-D."/>
            <person name="Fong B."/>
            <person name="Fujii C.Y."/>
            <person name="Gill J.E."/>
            <person name="Goldsmith A.D."/>
            <person name="Haas B."/>
            <person name="Hansen N.F."/>
            <person name="Hughes B."/>
            <person name="Huizar L."/>
            <person name="Hunter J.L."/>
            <person name="Jenkins J."/>
            <person name="Johnson-Hopson C."/>
            <person name="Khan S."/>
            <person name="Khaykin E."/>
            <person name="Kim C.J."/>
            <person name="Koo H.L."/>
            <person name="Kremenetskaia I."/>
            <person name="Kurtz D.B."/>
            <person name="Kwan A."/>
            <person name="Lam B."/>
            <person name="Langin-Hooper S."/>
            <person name="Lee A."/>
            <person name="Lee J.M."/>
            <person name="Lenz C.A."/>
            <person name="Li J.H."/>
            <person name="Li Y.-P."/>
            <person name="Lin X."/>
            <person name="Liu S.X."/>
            <person name="Liu Z.A."/>
            <person name="Luros J.S."/>
            <person name="Maiti R."/>
            <person name="Marziali A."/>
            <person name="Militscher J."/>
            <person name="Miranda M."/>
            <person name="Nguyen M."/>
            <person name="Nierman W.C."/>
            <person name="Osborne B.I."/>
            <person name="Pai G."/>
            <person name="Peterson J."/>
            <person name="Pham P.K."/>
            <person name="Rizzo M."/>
            <person name="Rooney T."/>
            <person name="Rowley D."/>
            <person name="Sakano H."/>
            <person name="Salzberg S.L."/>
            <person name="Schwartz J.R."/>
            <person name="Shinn P."/>
            <person name="Southwick A.M."/>
            <person name="Sun H."/>
            <person name="Tallon L.J."/>
            <person name="Tambunga G."/>
            <person name="Toriumi M.J."/>
            <person name="Town C.D."/>
            <person name="Utterback T."/>
            <person name="Van Aken S."/>
            <person name="Vaysberg M."/>
            <person name="Vysotskaia V.S."/>
            <person name="Walker M."/>
            <person name="Wu D."/>
            <person name="Yu G."/>
            <person name="Fraser C.M."/>
            <person name="Venter J.C."/>
            <person name="Davis R.W."/>
        </authorList>
    </citation>
    <scope>NUCLEOTIDE SEQUENCE [LARGE SCALE GENOMIC DNA]</scope>
    <source>
        <strain>cv. Columbia</strain>
    </source>
</reference>
<reference key="2">
    <citation type="journal article" date="2017" name="Plant J.">
        <title>Araport11: a complete reannotation of the Arabidopsis thaliana reference genome.</title>
        <authorList>
            <person name="Cheng C.Y."/>
            <person name="Krishnakumar V."/>
            <person name="Chan A.P."/>
            <person name="Thibaud-Nissen F."/>
            <person name="Schobel S."/>
            <person name="Town C.D."/>
        </authorList>
    </citation>
    <scope>GENOME REANNOTATION</scope>
    <source>
        <strain>cv. Columbia</strain>
    </source>
</reference>
<reference key="3">
    <citation type="journal article" date="2002" name="Gene">
        <title>Analysis and expression of the class III peroxidase large gene family in Arabidopsis thaliana.</title>
        <authorList>
            <person name="Tognolli M."/>
            <person name="Penel C."/>
            <person name="Greppin H."/>
            <person name="Simon P."/>
        </authorList>
    </citation>
    <scope>GENE FAMILY ORGANIZATION</scope>
    <scope>NOMENCLATURE</scope>
    <source>
        <strain>cv. Columbia</strain>
    </source>
</reference>
<keyword id="KW-0106">Calcium</keyword>
<keyword id="KW-1015">Disulfide bond</keyword>
<keyword id="KW-0325">Glycoprotein</keyword>
<keyword id="KW-0349">Heme</keyword>
<keyword id="KW-0376">Hydrogen peroxide</keyword>
<keyword id="KW-0408">Iron</keyword>
<keyword id="KW-0479">Metal-binding</keyword>
<keyword id="KW-0560">Oxidoreductase</keyword>
<keyword id="KW-0575">Peroxidase</keyword>
<keyword id="KW-1185">Reference proteome</keyword>
<keyword id="KW-0964">Secreted</keyword>
<keyword id="KW-0732">Signal</keyword>
<name>PER13_ARATH</name>
<accession>O49293</accession>
<accession>F4I5K6</accession>
<organism>
    <name type="scientific">Arabidopsis thaliana</name>
    <name type="common">Mouse-ear cress</name>
    <dbReference type="NCBI Taxonomy" id="3702"/>
    <lineage>
        <taxon>Eukaryota</taxon>
        <taxon>Viridiplantae</taxon>
        <taxon>Streptophyta</taxon>
        <taxon>Embryophyta</taxon>
        <taxon>Tracheophyta</taxon>
        <taxon>Spermatophyta</taxon>
        <taxon>Magnoliopsida</taxon>
        <taxon>eudicotyledons</taxon>
        <taxon>Gunneridae</taxon>
        <taxon>Pentapetalae</taxon>
        <taxon>rosids</taxon>
        <taxon>malvids</taxon>
        <taxon>Brassicales</taxon>
        <taxon>Brassicaceae</taxon>
        <taxon>Camelineae</taxon>
        <taxon>Arabidopsis</taxon>
    </lineage>
</organism>
<protein>
    <recommendedName>
        <fullName>Peroxidase 13</fullName>
        <shortName>Atperox P13</shortName>
        <ecNumber>1.11.1.7</ecNumber>
    </recommendedName>
</protein>
<dbReference type="EC" id="1.11.1.7"/>
<dbReference type="EMBL" id="AC002291">
    <property type="protein sequence ID" value="AAC00622.1"/>
    <property type="status" value="ALT_INIT"/>
    <property type="molecule type" value="Genomic_DNA"/>
</dbReference>
<dbReference type="EMBL" id="CP002684">
    <property type="protein sequence ID" value="AEE35935.2"/>
    <property type="molecule type" value="Genomic_DNA"/>
</dbReference>
<dbReference type="PIR" id="H96799">
    <property type="entry name" value="H96799"/>
</dbReference>
<dbReference type="RefSeq" id="NP_177835.3">
    <property type="nucleotide sequence ID" value="NM_106360.3"/>
</dbReference>
<dbReference type="SMR" id="O49293"/>
<dbReference type="FunCoup" id="O49293">
    <property type="interactions" value="127"/>
</dbReference>
<dbReference type="STRING" id="3702.O49293"/>
<dbReference type="PeroxiBase" id="94">
    <property type="entry name" value="AtPrx13"/>
</dbReference>
<dbReference type="GlyCosmos" id="O49293">
    <property type="glycosylation" value="1 site, No reported glycans"/>
</dbReference>
<dbReference type="GlyGen" id="O49293">
    <property type="glycosylation" value="1 site"/>
</dbReference>
<dbReference type="iPTMnet" id="O49293"/>
<dbReference type="PaxDb" id="3702-AT1G77100.1"/>
<dbReference type="ProteomicsDB" id="234828"/>
<dbReference type="EnsemblPlants" id="AT1G77100.1">
    <property type="protein sequence ID" value="AT1G77100.1"/>
    <property type="gene ID" value="AT1G77100"/>
</dbReference>
<dbReference type="GeneID" id="844045"/>
<dbReference type="Gramene" id="AT1G77100.1">
    <property type="protein sequence ID" value="AT1G77100.1"/>
    <property type="gene ID" value="AT1G77100"/>
</dbReference>
<dbReference type="KEGG" id="ath:AT1G77100"/>
<dbReference type="Araport" id="AT1G77100"/>
<dbReference type="TAIR" id="AT1G77100"/>
<dbReference type="eggNOG" id="ENOG502QQ2G">
    <property type="taxonomic scope" value="Eukaryota"/>
</dbReference>
<dbReference type="HOGENOM" id="CLU_010543_0_3_1"/>
<dbReference type="InParanoid" id="O49293"/>
<dbReference type="OMA" id="MIDSYLV"/>
<dbReference type="PhylomeDB" id="O49293"/>
<dbReference type="BioCyc" id="ARA:AT1G77100-MONOMER"/>
<dbReference type="PRO" id="PR:O49293"/>
<dbReference type="Proteomes" id="UP000006548">
    <property type="component" value="Chromosome 1"/>
</dbReference>
<dbReference type="ExpressionAtlas" id="O49293">
    <property type="expression patterns" value="baseline and differential"/>
</dbReference>
<dbReference type="GO" id="GO:0005576">
    <property type="term" value="C:extracellular region"/>
    <property type="evidence" value="ECO:0007669"/>
    <property type="project" value="UniProtKB-SubCell"/>
</dbReference>
<dbReference type="GO" id="GO:0020037">
    <property type="term" value="F:heme binding"/>
    <property type="evidence" value="ECO:0007669"/>
    <property type="project" value="InterPro"/>
</dbReference>
<dbReference type="GO" id="GO:0140825">
    <property type="term" value="F:lactoperoxidase activity"/>
    <property type="evidence" value="ECO:0007669"/>
    <property type="project" value="UniProtKB-EC"/>
</dbReference>
<dbReference type="GO" id="GO:0046872">
    <property type="term" value="F:metal ion binding"/>
    <property type="evidence" value="ECO:0007669"/>
    <property type="project" value="UniProtKB-KW"/>
</dbReference>
<dbReference type="GO" id="GO:0042744">
    <property type="term" value="P:hydrogen peroxide catabolic process"/>
    <property type="evidence" value="ECO:0007669"/>
    <property type="project" value="UniProtKB-KW"/>
</dbReference>
<dbReference type="GO" id="GO:0006979">
    <property type="term" value="P:response to oxidative stress"/>
    <property type="evidence" value="ECO:0007669"/>
    <property type="project" value="InterPro"/>
</dbReference>
<dbReference type="CDD" id="cd00693">
    <property type="entry name" value="secretory_peroxidase"/>
    <property type="match status" value="1"/>
</dbReference>
<dbReference type="FunFam" id="1.10.420.10:FF:000010">
    <property type="entry name" value="Peroxidase"/>
    <property type="match status" value="1"/>
</dbReference>
<dbReference type="FunFam" id="1.10.520.10:FF:000008">
    <property type="entry name" value="Peroxidase"/>
    <property type="match status" value="1"/>
</dbReference>
<dbReference type="Gene3D" id="1.10.520.10">
    <property type="match status" value="1"/>
</dbReference>
<dbReference type="Gene3D" id="1.10.420.10">
    <property type="entry name" value="Peroxidase, domain 2"/>
    <property type="match status" value="1"/>
</dbReference>
<dbReference type="InterPro" id="IPR002016">
    <property type="entry name" value="Haem_peroxidase"/>
</dbReference>
<dbReference type="InterPro" id="IPR010255">
    <property type="entry name" value="Haem_peroxidase_sf"/>
</dbReference>
<dbReference type="InterPro" id="IPR000823">
    <property type="entry name" value="Peroxidase_pln"/>
</dbReference>
<dbReference type="InterPro" id="IPR019794">
    <property type="entry name" value="Peroxidases_AS"/>
</dbReference>
<dbReference type="InterPro" id="IPR033905">
    <property type="entry name" value="Secretory_peroxidase"/>
</dbReference>
<dbReference type="PANTHER" id="PTHR31517">
    <property type="match status" value="1"/>
</dbReference>
<dbReference type="PANTHER" id="PTHR31517:SF51">
    <property type="entry name" value="PEROXIDASE 55"/>
    <property type="match status" value="1"/>
</dbReference>
<dbReference type="Pfam" id="PF00141">
    <property type="entry name" value="peroxidase"/>
    <property type="match status" value="1"/>
</dbReference>
<dbReference type="PRINTS" id="PR00458">
    <property type="entry name" value="PEROXIDASE"/>
</dbReference>
<dbReference type="PRINTS" id="PR00461">
    <property type="entry name" value="PLPEROXIDASE"/>
</dbReference>
<dbReference type="SUPFAM" id="SSF48113">
    <property type="entry name" value="Heme-dependent peroxidases"/>
    <property type="match status" value="1"/>
</dbReference>
<dbReference type="PROSITE" id="PS00436">
    <property type="entry name" value="PEROXIDASE_2"/>
    <property type="match status" value="1"/>
</dbReference>
<dbReference type="PROSITE" id="PS50873">
    <property type="entry name" value="PEROXIDASE_4"/>
    <property type="match status" value="1"/>
</dbReference>
<comment type="function">
    <text>Removal of H(2)O(2), oxidation of toxic reductants, biosynthesis and degradation of lignin, suberization, auxin catabolism, response to environmental stresses such as wounding, pathogen attack and oxidative stress. These functions might be dependent on each isozyme/isoform in each plant tissue.</text>
</comment>
<comment type="catalytic activity">
    <reaction>
        <text>2 a phenolic donor + H2O2 = 2 a phenolic radical donor + 2 H2O</text>
        <dbReference type="Rhea" id="RHEA:56136"/>
        <dbReference type="ChEBI" id="CHEBI:15377"/>
        <dbReference type="ChEBI" id="CHEBI:16240"/>
        <dbReference type="ChEBI" id="CHEBI:139520"/>
        <dbReference type="ChEBI" id="CHEBI:139521"/>
        <dbReference type="EC" id="1.11.1.7"/>
    </reaction>
</comment>
<comment type="cofactor">
    <cofactor evidence="2">
        <name>heme b</name>
        <dbReference type="ChEBI" id="CHEBI:60344"/>
    </cofactor>
    <text evidence="2">Binds 1 heme b (iron(II)-protoporphyrin IX) group per subunit.</text>
</comment>
<comment type="cofactor">
    <cofactor evidence="2">
        <name>Ca(2+)</name>
        <dbReference type="ChEBI" id="CHEBI:29108"/>
    </cofactor>
    <text evidence="2">Binds 2 calcium ions per subunit.</text>
</comment>
<comment type="subcellular location">
    <subcellularLocation>
        <location evidence="2">Secreted</location>
    </subcellularLocation>
</comment>
<comment type="miscellaneous">
    <text>There are 73 peroxidase genes in A.thaliana.</text>
</comment>
<comment type="similarity">
    <text evidence="2">Belongs to the peroxidase family. Classical plant (class III) peroxidase subfamily.</text>
</comment>
<comment type="sequence caution" evidence="4">
    <conflict type="erroneous initiation">
        <sequence resource="EMBL-CDS" id="AAC00622"/>
    </conflict>
    <text>Extended N-terminus.</text>
</comment>
<sequence length="319" mass="34765">MITIALFLVLLYFHDQLGYSAAQLQFGFYSETCPSAESIVRDVVQQAVTNDPGKAAVLLRLQFHDCFVEGCDGSILIKHGGNDDERFAAGNAGVAGFDVIDEAKSELERFCPGVVSCADIVALAARDAIAEAKGPFYEVPTGRRDGLIANVDHAKNLPDVQDSINTLKSKFREKGLSDQDLVLLSAGAHTIGTTACFFVIPRLDAQDPTINPEFFQILRSKCPQGGDVNVRIPLDWDSQFVFDNQIFQNIKNGRGVILSDSVLYQDNNMKKIIDSYLETNQSSKANFAADFTKAMIKMGAIGVKIGAEGEIRRLCSATN</sequence>
<proteinExistence type="inferred from homology"/>
<gene>
    <name type="primary">PER13</name>
    <name type="synonym">P13</name>
    <name type="ordered locus">At1g77100</name>
    <name type="ORF">F22K20.17</name>
</gene>